<dbReference type="EMBL" id="AL513382">
    <property type="protein sequence ID" value="CAD05368.1"/>
    <property type="molecule type" value="Genomic_DNA"/>
</dbReference>
<dbReference type="EMBL" id="AE014613">
    <property type="protein sequence ID" value="AAO69579.1"/>
    <property type="molecule type" value="Genomic_DNA"/>
</dbReference>
<dbReference type="RefSeq" id="NP_455456.1">
    <property type="nucleotide sequence ID" value="NC_003198.1"/>
</dbReference>
<dbReference type="RefSeq" id="WP_000029921.1">
    <property type="nucleotide sequence ID" value="NZ_WSUR01000013.1"/>
</dbReference>
<dbReference type="SMR" id="Q8Z810"/>
<dbReference type="STRING" id="220341.gene:17584959"/>
<dbReference type="KEGG" id="stt:t1966"/>
<dbReference type="KEGG" id="sty:STY0966"/>
<dbReference type="PATRIC" id="fig|220341.7.peg.975"/>
<dbReference type="eggNOG" id="COG0477">
    <property type="taxonomic scope" value="Bacteria"/>
</dbReference>
<dbReference type="HOGENOM" id="CLU_035018_1_2_6"/>
<dbReference type="OMA" id="YLSHQGM"/>
<dbReference type="OrthoDB" id="9810614at2"/>
<dbReference type="Proteomes" id="UP000000541">
    <property type="component" value="Chromosome"/>
</dbReference>
<dbReference type="Proteomes" id="UP000002670">
    <property type="component" value="Chromosome"/>
</dbReference>
<dbReference type="GO" id="GO:0005886">
    <property type="term" value="C:plasma membrane"/>
    <property type="evidence" value="ECO:0007669"/>
    <property type="project" value="UniProtKB-SubCell"/>
</dbReference>
<dbReference type="GO" id="GO:0022857">
    <property type="term" value="F:transmembrane transporter activity"/>
    <property type="evidence" value="ECO:0007669"/>
    <property type="project" value="UniProtKB-UniRule"/>
</dbReference>
<dbReference type="CDD" id="cd17477">
    <property type="entry name" value="MFS_YcaD_like"/>
    <property type="match status" value="1"/>
</dbReference>
<dbReference type="FunFam" id="1.20.1250.20:FF:000041">
    <property type="entry name" value="Uncharacterized MFS-type transporter YcaD"/>
    <property type="match status" value="1"/>
</dbReference>
<dbReference type="FunFam" id="1.20.1250.20:FF:000066">
    <property type="entry name" value="Uncharacterized MFS-type transporter YcaD"/>
    <property type="match status" value="1"/>
</dbReference>
<dbReference type="Gene3D" id="1.20.1250.20">
    <property type="entry name" value="MFS general substrate transporter like domains"/>
    <property type="match status" value="2"/>
</dbReference>
<dbReference type="HAMAP" id="MF_01149">
    <property type="entry name" value="MFS_YcaD"/>
    <property type="match status" value="1"/>
</dbReference>
<dbReference type="InterPro" id="IPR011701">
    <property type="entry name" value="MFS"/>
</dbReference>
<dbReference type="InterPro" id="IPR020846">
    <property type="entry name" value="MFS_dom"/>
</dbReference>
<dbReference type="InterPro" id="IPR036259">
    <property type="entry name" value="MFS_trans_sf"/>
</dbReference>
<dbReference type="InterPro" id="IPR023745">
    <property type="entry name" value="MFS_YcaD"/>
</dbReference>
<dbReference type="InterPro" id="IPR047200">
    <property type="entry name" value="MFS_YcaD-like"/>
</dbReference>
<dbReference type="NCBIfam" id="NF002962">
    <property type="entry name" value="PRK03633.1"/>
    <property type="match status" value="1"/>
</dbReference>
<dbReference type="PANTHER" id="PTHR23521">
    <property type="entry name" value="TRANSPORTER MFS SUPERFAMILY"/>
    <property type="match status" value="1"/>
</dbReference>
<dbReference type="PANTHER" id="PTHR23521:SF2">
    <property type="entry name" value="TRANSPORTER MFS SUPERFAMILY"/>
    <property type="match status" value="1"/>
</dbReference>
<dbReference type="Pfam" id="PF07690">
    <property type="entry name" value="MFS_1"/>
    <property type="match status" value="1"/>
</dbReference>
<dbReference type="SUPFAM" id="SSF103473">
    <property type="entry name" value="MFS general substrate transporter"/>
    <property type="match status" value="1"/>
</dbReference>
<dbReference type="PROSITE" id="PS50850">
    <property type="entry name" value="MFS"/>
    <property type="match status" value="1"/>
</dbReference>
<organism>
    <name type="scientific">Salmonella typhi</name>
    <dbReference type="NCBI Taxonomy" id="90370"/>
    <lineage>
        <taxon>Bacteria</taxon>
        <taxon>Pseudomonadati</taxon>
        <taxon>Pseudomonadota</taxon>
        <taxon>Gammaproteobacteria</taxon>
        <taxon>Enterobacterales</taxon>
        <taxon>Enterobacteriaceae</taxon>
        <taxon>Salmonella</taxon>
    </lineage>
</organism>
<proteinExistence type="inferred from homology"/>
<sequence>MSIYTRPVMLLLCGLLLLTLAIAVLNTLVPLWLAQANLPTWQVGMVSSSYFTGNLVGTLFTGYLIKRIGFNRSYYLASLIFAAGCVGLGVMVGFWSWMSWRFIAGIGCAMIWVVVESALMCSGTSHNRGRLLAAYMMVYYMGTFLGQLLVSKVSGELLHVLPWVTGMILAGILPLLFTRIVNQQTQARHSSSISAMLKLRQARLGVNGCIISGIVLGSLYGLMPLYLKHQGMANASIGFWMAVLVSAGILGQWPMGRLADKFGRLLVLRVQVFVVILGSIAMLTQAAMAPALFILGAAGFTLYPVAMAWACEKVEHHQLVAMNQALLLSYTVGSLLGPSFAAMLMQNYSDNLLFIMIASVSFIYLLMLLRNVGQTPNPVAHI</sequence>
<reference key="1">
    <citation type="journal article" date="2001" name="Nature">
        <title>Complete genome sequence of a multiple drug resistant Salmonella enterica serovar Typhi CT18.</title>
        <authorList>
            <person name="Parkhill J."/>
            <person name="Dougan G."/>
            <person name="James K.D."/>
            <person name="Thomson N.R."/>
            <person name="Pickard D."/>
            <person name="Wain J."/>
            <person name="Churcher C.M."/>
            <person name="Mungall K.L."/>
            <person name="Bentley S.D."/>
            <person name="Holden M.T.G."/>
            <person name="Sebaihia M."/>
            <person name="Baker S."/>
            <person name="Basham D."/>
            <person name="Brooks K."/>
            <person name="Chillingworth T."/>
            <person name="Connerton P."/>
            <person name="Cronin A."/>
            <person name="Davis P."/>
            <person name="Davies R.M."/>
            <person name="Dowd L."/>
            <person name="White N."/>
            <person name="Farrar J."/>
            <person name="Feltwell T."/>
            <person name="Hamlin N."/>
            <person name="Haque A."/>
            <person name="Hien T.T."/>
            <person name="Holroyd S."/>
            <person name="Jagels K."/>
            <person name="Krogh A."/>
            <person name="Larsen T.S."/>
            <person name="Leather S."/>
            <person name="Moule S."/>
            <person name="O'Gaora P."/>
            <person name="Parry C."/>
            <person name="Quail M.A."/>
            <person name="Rutherford K.M."/>
            <person name="Simmonds M."/>
            <person name="Skelton J."/>
            <person name="Stevens K."/>
            <person name="Whitehead S."/>
            <person name="Barrell B.G."/>
        </authorList>
    </citation>
    <scope>NUCLEOTIDE SEQUENCE [LARGE SCALE GENOMIC DNA]</scope>
    <source>
        <strain>CT18</strain>
    </source>
</reference>
<reference key="2">
    <citation type="journal article" date="2003" name="J. Bacteriol.">
        <title>Comparative genomics of Salmonella enterica serovar Typhi strains Ty2 and CT18.</title>
        <authorList>
            <person name="Deng W."/>
            <person name="Liou S.-R."/>
            <person name="Plunkett G. III"/>
            <person name="Mayhew G.F."/>
            <person name="Rose D.J."/>
            <person name="Burland V."/>
            <person name="Kodoyianni V."/>
            <person name="Schwartz D.C."/>
            <person name="Blattner F.R."/>
        </authorList>
    </citation>
    <scope>NUCLEOTIDE SEQUENCE [LARGE SCALE GENOMIC DNA]</scope>
    <source>
        <strain>ATCC 700931 / Ty2</strain>
    </source>
</reference>
<comment type="subcellular location">
    <subcellularLocation>
        <location evidence="1">Cell inner membrane</location>
        <topology evidence="1">Multi-pass membrane protein</topology>
    </subcellularLocation>
</comment>
<comment type="similarity">
    <text evidence="3">Belongs to the major facilitator superfamily. YcaD (TC 2.A.1.26) family.</text>
</comment>
<evidence type="ECO:0000250" key="1"/>
<evidence type="ECO:0000255" key="2"/>
<evidence type="ECO:0000305" key="3"/>
<protein>
    <recommendedName>
        <fullName>Uncharacterized MFS-type transporter YcaD</fullName>
    </recommendedName>
</protein>
<gene>
    <name type="primary">ycaD</name>
    <name type="ordered locus">STY0966</name>
    <name type="ordered locus">t1966</name>
</gene>
<feature type="chain" id="PRO_0000084892" description="Uncharacterized MFS-type transporter YcaD">
    <location>
        <begin position="1"/>
        <end position="382"/>
    </location>
</feature>
<feature type="topological domain" description="Cytoplasmic" evidence="2">
    <location>
        <begin position="1"/>
        <end position="7"/>
    </location>
</feature>
<feature type="transmembrane region" description="Helical" evidence="2">
    <location>
        <begin position="8"/>
        <end position="28"/>
    </location>
</feature>
<feature type="topological domain" description="Periplasmic" evidence="2">
    <location>
        <begin position="29"/>
        <end position="44"/>
    </location>
</feature>
<feature type="transmembrane region" description="Helical" evidence="2">
    <location>
        <begin position="45"/>
        <end position="65"/>
    </location>
</feature>
<feature type="topological domain" description="Cytoplasmic" evidence="2">
    <location>
        <begin position="66"/>
        <end position="74"/>
    </location>
</feature>
<feature type="transmembrane region" description="Helical" evidence="2">
    <location>
        <begin position="75"/>
        <end position="95"/>
    </location>
</feature>
<feature type="topological domain" description="Periplasmic" evidence="2">
    <location>
        <begin position="96"/>
        <end position="101"/>
    </location>
</feature>
<feature type="transmembrane region" description="Helical" evidence="2">
    <location>
        <begin position="102"/>
        <end position="122"/>
    </location>
</feature>
<feature type="topological domain" description="Cytoplasmic" evidence="2">
    <location>
        <begin position="123"/>
        <end position="130"/>
    </location>
</feature>
<feature type="transmembrane region" description="Helical" evidence="2">
    <location>
        <begin position="131"/>
        <end position="151"/>
    </location>
</feature>
<feature type="topological domain" description="Periplasmic" evidence="2">
    <location>
        <begin position="152"/>
        <end position="156"/>
    </location>
</feature>
<feature type="transmembrane region" description="Helical" evidence="2">
    <location>
        <begin position="157"/>
        <end position="177"/>
    </location>
</feature>
<feature type="topological domain" description="Cytoplasmic" evidence="2">
    <location>
        <begin position="178"/>
        <end position="203"/>
    </location>
</feature>
<feature type="transmembrane region" description="Helical" evidence="2">
    <location>
        <begin position="204"/>
        <end position="224"/>
    </location>
</feature>
<feature type="topological domain" description="Periplasmic" evidence="2">
    <location>
        <begin position="225"/>
        <end position="230"/>
    </location>
</feature>
<feature type="transmembrane region" description="Helical" evidence="2">
    <location>
        <begin position="231"/>
        <end position="251"/>
    </location>
</feature>
<feature type="topological domain" description="Cytoplasmic" evidence="2">
    <location>
        <begin position="252"/>
        <end position="269"/>
    </location>
</feature>
<feature type="transmembrane region" description="Helical" evidence="2">
    <location>
        <begin position="270"/>
        <end position="290"/>
    </location>
</feature>
<feature type="transmembrane region" description="Helical" evidence="2">
    <location>
        <begin position="291"/>
        <end position="311"/>
    </location>
</feature>
<feature type="topological domain" description="Cytoplasmic" evidence="2">
    <location>
        <begin position="312"/>
        <end position="324"/>
    </location>
</feature>
<feature type="transmembrane region" description="Helical" evidence="2">
    <location>
        <begin position="325"/>
        <end position="345"/>
    </location>
</feature>
<feature type="topological domain" description="Periplasmic" evidence="2">
    <location>
        <begin position="346"/>
        <end position="348"/>
    </location>
</feature>
<feature type="transmembrane region" description="Helical" evidence="2">
    <location>
        <begin position="349"/>
        <end position="369"/>
    </location>
</feature>
<feature type="topological domain" description="Cytoplasmic" evidence="2">
    <location>
        <begin position="370"/>
        <end position="382"/>
    </location>
</feature>
<keyword id="KW-0997">Cell inner membrane</keyword>
<keyword id="KW-1003">Cell membrane</keyword>
<keyword id="KW-0472">Membrane</keyword>
<keyword id="KW-0812">Transmembrane</keyword>
<keyword id="KW-1133">Transmembrane helix</keyword>
<keyword id="KW-0813">Transport</keyword>
<name>YCAD_SALTI</name>
<accession>Q8Z810</accession>